<proteinExistence type="inferred from homology"/>
<evidence type="ECO:0000255" key="1">
    <source>
        <dbReference type="HAMAP-Rule" id="MF_00611"/>
    </source>
</evidence>
<accession>A4VFW9</accession>
<gene>
    <name evidence="1" type="primary">fdhE</name>
    <name type="ordered locus">PST_0163</name>
</gene>
<organism>
    <name type="scientific">Stutzerimonas stutzeri (strain A1501)</name>
    <name type="common">Pseudomonas stutzeri</name>
    <dbReference type="NCBI Taxonomy" id="379731"/>
    <lineage>
        <taxon>Bacteria</taxon>
        <taxon>Pseudomonadati</taxon>
        <taxon>Pseudomonadota</taxon>
        <taxon>Gammaproteobacteria</taxon>
        <taxon>Pseudomonadales</taxon>
        <taxon>Pseudomonadaceae</taxon>
        <taxon>Stutzerimonas</taxon>
    </lineage>
</organism>
<sequence>MAGTILEPGQIEAAASKPPFTNLPPRDLFALRSARLAKLAEDHPLADYLRLLAGVCQAQQQVLDNPPASAPLDPARTRECFKHAMPPLAADTLVREGAWLPLLDAWLDAFAVPDNLSVIAAVDQLRRADSGQRKAWAVALVSGQYDSLPPALVPFLGAALQLAWTHWLLQLDLSDLREREDQTLCPCCGAPPMAGVIRHRGQLNGLRYLVCSLCACEWHYVRLKCSHCRSTKKLDYLHFEGSPQGIKAEACPECNGYLKQLYLELAPDGESLSADLATLDLDLLLADQGYNRQAPNLLLAPGHEA</sequence>
<comment type="function">
    <text evidence="1">Necessary for formate dehydrogenase activity.</text>
</comment>
<comment type="subcellular location">
    <subcellularLocation>
        <location evidence="1">Cytoplasm</location>
    </subcellularLocation>
</comment>
<comment type="similarity">
    <text evidence="1">Belongs to the FdhE family.</text>
</comment>
<dbReference type="EMBL" id="CP000304">
    <property type="protein sequence ID" value="ABP77870.1"/>
    <property type="molecule type" value="Genomic_DNA"/>
</dbReference>
<dbReference type="RefSeq" id="WP_011911409.1">
    <property type="nucleotide sequence ID" value="NC_009434.1"/>
</dbReference>
<dbReference type="SMR" id="A4VFW9"/>
<dbReference type="KEGG" id="psa:PST_0163"/>
<dbReference type="eggNOG" id="COG3058">
    <property type="taxonomic scope" value="Bacteria"/>
</dbReference>
<dbReference type="HOGENOM" id="CLU_055275_0_0_6"/>
<dbReference type="Proteomes" id="UP000000233">
    <property type="component" value="Chromosome"/>
</dbReference>
<dbReference type="GO" id="GO:0005829">
    <property type="term" value="C:cytosol"/>
    <property type="evidence" value="ECO:0007669"/>
    <property type="project" value="TreeGrafter"/>
</dbReference>
<dbReference type="GO" id="GO:0008199">
    <property type="term" value="F:ferric iron binding"/>
    <property type="evidence" value="ECO:0007669"/>
    <property type="project" value="TreeGrafter"/>
</dbReference>
<dbReference type="GO" id="GO:0051604">
    <property type="term" value="P:protein maturation"/>
    <property type="evidence" value="ECO:0007669"/>
    <property type="project" value="TreeGrafter"/>
</dbReference>
<dbReference type="CDD" id="cd16341">
    <property type="entry name" value="FdhE"/>
    <property type="match status" value="1"/>
</dbReference>
<dbReference type="FunFam" id="3.90.1670.10:FF:000001">
    <property type="entry name" value="Protein FdhE"/>
    <property type="match status" value="1"/>
</dbReference>
<dbReference type="Gene3D" id="3.90.1670.10">
    <property type="entry name" value="FdhE-like domain"/>
    <property type="match status" value="1"/>
</dbReference>
<dbReference type="HAMAP" id="MF_00611">
    <property type="entry name" value="FdeH"/>
    <property type="match status" value="1"/>
</dbReference>
<dbReference type="InterPro" id="IPR024064">
    <property type="entry name" value="FdhE-like_sf"/>
</dbReference>
<dbReference type="InterPro" id="IPR056796">
    <property type="entry name" value="FdhE_C"/>
</dbReference>
<dbReference type="InterPro" id="IPR056797">
    <property type="entry name" value="FdhE_central"/>
</dbReference>
<dbReference type="InterPro" id="IPR056774">
    <property type="entry name" value="FdhE_N"/>
</dbReference>
<dbReference type="InterPro" id="IPR006452">
    <property type="entry name" value="Formate_DH_accessory"/>
</dbReference>
<dbReference type="NCBIfam" id="TIGR01562">
    <property type="entry name" value="FdhE"/>
    <property type="match status" value="1"/>
</dbReference>
<dbReference type="PANTHER" id="PTHR37689">
    <property type="entry name" value="PROTEIN FDHE"/>
    <property type="match status" value="1"/>
</dbReference>
<dbReference type="PANTHER" id="PTHR37689:SF1">
    <property type="entry name" value="PROTEIN FDHE"/>
    <property type="match status" value="1"/>
</dbReference>
<dbReference type="Pfam" id="PF24860">
    <property type="entry name" value="FdhE_C"/>
    <property type="match status" value="1"/>
</dbReference>
<dbReference type="Pfam" id="PF24859">
    <property type="entry name" value="FdhE_central"/>
    <property type="match status" value="1"/>
</dbReference>
<dbReference type="Pfam" id="PF04216">
    <property type="entry name" value="FdhE_N"/>
    <property type="match status" value="1"/>
</dbReference>
<dbReference type="PIRSF" id="PIRSF018296">
    <property type="entry name" value="Format_dh_formtn"/>
    <property type="match status" value="1"/>
</dbReference>
<dbReference type="SUPFAM" id="SSF144020">
    <property type="entry name" value="FdhE-like"/>
    <property type="match status" value="1"/>
</dbReference>
<feature type="chain" id="PRO_1000056708" description="Protein FdhE homolog">
    <location>
        <begin position="1"/>
        <end position="305"/>
    </location>
</feature>
<name>FDHE_STUS1</name>
<protein>
    <recommendedName>
        <fullName evidence="1">Protein FdhE homolog</fullName>
    </recommendedName>
</protein>
<reference key="1">
    <citation type="journal article" date="2008" name="Proc. Natl. Acad. Sci. U.S.A.">
        <title>Nitrogen fixation island and rhizosphere competence traits in the genome of root-associated Pseudomonas stutzeri A1501.</title>
        <authorList>
            <person name="Yan Y."/>
            <person name="Yang J."/>
            <person name="Dou Y."/>
            <person name="Chen M."/>
            <person name="Ping S."/>
            <person name="Peng J."/>
            <person name="Lu W."/>
            <person name="Zhang W."/>
            <person name="Yao Z."/>
            <person name="Li H."/>
            <person name="Liu W."/>
            <person name="He S."/>
            <person name="Geng L."/>
            <person name="Zhang X."/>
            <person name="Yang F."/>
            <person name="Yu H."/>
            <person name="Zhan Y."/>
            <person name="Li D."/>
            <person name="Lin Z."/>
            <person name="Wang Y."/>
            <person name="Elmerich C."/>
            <person name="Lin M."/>
            <person name="Jin Q."/>
        </authorList>
    </citation>
    <scope>NUCLEOTIDE SEQUENCE [LARGE SCALE GENOMIC DNA]</scope>
    <source>
        <strain>A1501</strain>
    </source>
</reference>
<keyword id="KW-0963">Cytoplasm</keyword>
<keyword id="KW-1185">Reference proteome</keyword>